<protein>
    <recommendedName>
        <fullName evidence="6">Delta-thalatoxin-Hhe1a</fullName>
        <shortName evidence="6">Delta-TATX-Hhe1a</shortName>
    </recommendedName>
    <alternativeName>
        <fullName evidence="5">Delta-thalatoxin-Hh1x</fullName>
        <shortName evidence="5">Delta-TLTX-Hh1x</shortName>
    </alternativeName>
    <alternativeName>
        <fullName evidence="8">Hh X</fullName>
    </alternativeName>
</protein>
<evidence type="ECO:0000250" key="1"/>
<evidence type="ECO:0000250" key="2">
    <source>
        <dbReference type="UniProtKB" id="P19651"/>
    </source>
</evidence>
<evidence type="ECO:0000255" key="3"/>
<evidence type="ECO:0000269" key="4">
    <source>
    </source>
</evidence>
<evidence type="ECO:0000303" key="5">
    <source>
    </source>
</evidence>
<evidence type="ECO:0000303" key="6">
    <source>
    </source>
</evidence>
<evidence type="ECO:0000305" key="7"/>
<evidence type="ECO:0000312" key="8">
    <source>
        <dbReference type="EMBL" id="BAI66463.1"/>
    </source>
</evidence>
<comment type="function">
    <text evidence="1">Binds specifically to the voltage-gated sodium channel (Nav) and delays its inactivation.</text>
</comment>
<comment type="subcellular location">
    <subcellularLocation>
        <location evidence="4">Secreted</location>
    </subcellularLocation>
    <subcellularLocation>
        <location evidence="4">Nematocyst</location>
    </subcellularLocation>
</comment>
<comment type="similarity">
    <text evidence="7">Belongs to the sea anemone sodium channel inhibitory toxin family. Type II subfamily.</text>
</comment>
<sequence length="84" mass="9221">MAYQKIVFVALMLVLAVSAMRLPDQQDQDISVAKRVACKCDDDGPDIRSATLTGTVDLGSCNEGWEKCASYYTVVADCCRRPRS</sequence>
<dbReference type="EMBL" id="AB512762">
    <property type="protein sequence ID" value="BAI66463.1"/>
    <property type="molecule type" value="mRNA"/>
</dbReference>
<dbReference type="SMR" id="D2KX91"/>
<dbReference type="GO" id="GO:0005576">
    <property type="term" value="C:extracellular region"/>
    <property type="evidence" value="ECO:0007669"/>
    <property type="project" value="UniProtKB-SubCell"/>
</dbReference>
<dbReference type="GO" id="GO:0042151">
    <property type="term" value="C:nematocyst"/>
    <property type="evidence" value="ECO:0007669"/>
    <property type="project" value="UniProtKB-SubCell"/>
</dbReference>
<dbReference type="GO" id="GO:0017080">
    <property type="term" value="F:sodium channel regulator activity"/>
    <property type="evidence" value="ECO:0007669"/>
    <property type="project" value="UniProtKB-KW"/>
</dbReference>
<dbReference type="GO" id="GO:0090729">
    <property type="term" value="F:toxin activity"/>
    <property type="evidence" value="ECO:0007669"/>
    <property type="project" value="UniProtKB-KW"/>
</dbReference>
<dbReference type="Gene3D" id="2.20.20.10">
    <property type="entry name" value="Anthopleurin-A"/>
    <property type="match status" value="1"/>
</dbReference>
<dbReference type="InterPro" id="IPR023355">
    <property type="entry name" value="Myo_ane_neurotoxin_sf"/>
</dbReference>
<dbReference type="Pfam" id="PF00706">
    <property type="entry name" value="Toxin_4"/>
    <property type="match status" value="1"/>
</dbReference>
<dbReference type="SUPFAM" id="SSF57392">
    <property type="entry name" value="Defensin-like"/>
    <property type="match status" value="1"/>
</dbReference>
<accession>D2KX91</accession>
<feature type="signal peptide" evidence="3">
    <location>
        <begin position="1"/>
        <end position="19"/>
    </location>
</feature>
<feature type="propeptide" id="PRO_0000404207" evidence="4">
    <location>
        <begin position="20"/>
        <end position="33"/>
    </location>
</feature>
<feature type="chain" id="PRO_0000404208" description="Delta-thalatoxin-Hhe1a">
    <location>
        <begin position="36"/>
        <end position="84"/>
    </location>
</feature>
<feature type="disulfide bond" evidence="2">
    <location>
        <begin position="38"/>
        <end position="78"/>
    </location>
</feature>
<feature type="disulfide bond" evidence="2">
    <location>
        <begin position="40"/>
        <end position="68"/>
    </location>
</feature>
<feature type="disulfide bond" evidence="2">
    <location>
        <begin position="61"/>
        <end position="79"/>
    </location>
</feature>
<name>NA2X_HETHE</name>
<proteinExistence type="evidence at protein level"/>
<organism>
    <name type="scientific">Heterodactyla hemprichii</name>
    <name type="common">Hemprich's sea anemone</name>
    <dbReference type="NCBI Taxonomy" id="659514"/>
    <lineage>
        <taxon>Eukaryota</taxon>
        <taxon>Metazoa</taxon>
        <taxon>Cnidaria</taxon>
        <taxon>Anthozoa</taxon>
        <taxon>Hexacorallia</taxon>
        <taxon>Actiniaria</taxon>
        <taxon>Nynantheae</taxon>
        <taxon>Thalassianthidae</taxon>
        <taxon>Heterodactyla</taxon>
    </lineage>
</organism>
<keyword id="KW-0165">Cleavage on pair of basic residues</keyword>
<keyword id="KW-0903">Direct protein sequencing</keyword>
<keyword id="KW-1015">Disulfide bond</keyword>
<keyword id="KW-0872">Ion channel impairing toxin</keyword>
<keyword id="KW-0166">Nematocyst</keyword>
<keyword id="KW-0528">Neurotoxin</keyword>
<keyword id="KW-0964">Secreted</keyword>
<keyword id="KW-0732">Signal</keyword>
<keyword id="KW-0800">Toxin</keyword>
<keyword id="KW-0738">Voltage-gated sodium channel impairing toxin</keyword>
<reference key="1">
    <citation type="journal article" date="2010" name="Comp. Biochem. Physiol.">
        <title>Isolation and cDNA cloning of type 2 sodium channel peptide toxins from three species of sea anemones (Cryptodendrum adhaesivum, Heterodactyla hemprichii and Thalassianthus aster) belonging to the family Thalassianthidae.</title>
        <authorList>
            <person name="Maeda M."/>
            <person name="Honma T."/>
            <person name="Shiomi K."/>
        </authorList>
    </citation>
    <scope>NUCLEOTIDE SEQUENCE [MRNA]</scope>
    <scope>PROTEIN SEQUENCE OF 36-67</scope>
    <scope>SUBCELLULAR LOCATION</scope>
</reference>
<reference key="2">
    <citation type="journal article" date="2012" name="Toxicon">
        <title>Development of a rational nomenclature for naming peptide and protein toxins from sea anemones.</title>
        <authorList>
            <person name="Oliveira J.S."/>
            <person name="Fuentes-Silva D."/>
            <person name="King G.F."/>
        </authorList>
    </citation>
    <scope>NOMENCLATURE</scope>
</reference>